<accession>Q5RDP9</accession>
<proteinExistence type="evidence at transcript level"/>
<dbReference type="EMBL" id="CR857854">
    <property type="protein sequence ID" value="CAH90108.1"/>
    <property type="molecule type" value="mRNA"/>
</dbReference>
<dbReference type="RefSeq" id="NP_001125012.1">
    <property type="nucleotide sequence ID" value="NM_001131540.1"/>
</dbReference>
<dbReference type="SMR" id="Q5RDP9"/>
<dbReference type="FunCoup" id="Q5RDP9">
    <property type="interactions" value="1154"/>
</dbReference>
<dbReference type="STRING" id="9601.ENSPPYP00000007683"/>
<dbReference type="Ensembl" id="ENSPPYT00000007996.3">
    <property type="protein sequence ID" value="ENSPPYP00000007683.2"/>
    <property type="gene ID" value="ENSPPYG00000006773.3"/>
</dbReference>
<dbReference type="GeneID" id="100171891"/>
<dbReference type="KEGG" id="pon:100171891"/>
<dbReference type="CTD" id="10239"/>
<dbReference type="eggNOG" id="KOG0936">
    <property type="taxonomic scope" value="Eukaryota"/>
</dbReference>
<dbReference type="GeneTree" id="ENSGT00970000193421"/>
<dbReference type="HOGENOM" id="CLU_061221_2_2_1"/>
<dbReference type="InParanoid" id="Q5RDP9"/>
<dbReference type="OrthoDB" id="10261046at2759"/>
<dbReference type="TreeFam" id="TF300189"/>
<dbReference type="Proteomes" id="UP000001595">
    <property type="component" value="Chromosome 15"/>
</dbReference>
<dbReference type="GO" id="GO:0030123">
    <property type="term" value="C:AP-3 adaptor complex"/>
    <property type="evidence" value="ECO:0007669"/>
    <property type="project" value="InterPro"/>
</dbReference>
<dbReference type="GO" id="GO:1904115">
    <property type="term" value="C:axon cytoplasm"/>
    <property type="evidence" value="ECO:0007669"/>
    <property type="project" value="GOC"/>
</dbReference>
<dbReference type="GO" id="GO:0030659">
    <property type="term" value="C:cytoplasmic vesicle membrane"/>
    <property type="evidence" value="ECO:0007669"/>
    <property type="project" value="UniProtKB-SubCell"/>
</dbReference>
<dbReference type="GO" id="GO:0005794">
    <property type="term" value="C:Golgi apparatus"/>
    <property type="evidence" value="ECO:0007669"/>
    <property type="project" value="UniProtKB-SubCell"/>
</dbReference>
<dbReference type="GO" id="GO:0008089">
    <property type="term" value="P:anterograde axonal transport"/>
    <property type="evidence" value="ECO:0000250"/>
    <property type="project" value="UniProtKB"/>
</dbReference>
<dbReference type="GO" id="GO:0048490">
    <property type="term" value="P:anterograde synaptic vesicle transport"/>
    <property type="evidence" value="ECO:0000250"/>
    <property type="project" value="UniProtKB"/>
</dbReference>
<dbReference type="GO" id="GO:0006896">
    <property type="term" value="P:Golgi to vacuole transport"/>
    <property type="evidence" value="ECO:0007669"/>
    <property type="project" value="InterPro"/>
</dbReference>
<dbReference type="GO" id="GO:0006886">
    <property type="term" value="P:intracellular protein transport"/>
    <property type="evidence" value="ECO:0007669"/>
    <property type="project" value="InterPro"/>
</dbReference>
<dbReference type="CDD" id="cd14834">
    <property type="entry name" value="AP3_sigma"/>
    <property type="match status" value="1"/>
</dbReference>
<dbReference type="FunFam" id="3.30.450.60:FF:000001">
    <property type="entry name" value="AP complex subunit sigma"/>
    <property type="match status" value="1"/>
</dbReference>
<dbReference type="Gene3D" id="3.30.450.60">
    <property type="match status" value="1"/>
</dbReference>
<dbReference type="InterPro" id="IPR016635">
    <property type="entry name" value="AP_complex_ssu"/>
</dbReference>
<dbReference type="InterPro" id="IPR022775">
    <property type="entry name" value="AP_mu_sigma_su"/>
</dbReference>
<dbReference type="InterPro" id="IPR027155">
    <property type="entry name" value="APS3"/>
</dbReference>
<dbReference type="InterPro" id="IPR000804">
    <property type="entry name" value="Clathrin_sm-chain_CS"/>
</dbReference>
<dbReference type="InterPro" id="IPR011012">
    <property type="entry name" value="Longin-like_dom_sf"/>
</dbReference>
<dbReference type="PANTHER" id="PTHR11753">
    <property type="entry name" value="ADAPTOR COMPLEXES SMALL SUBUNIT FAMILY"/>
    <property type="match status" value="1"/>
</dbReference>
<dbReference type="Pfam" id="PF01217">
    <property type="entry name" value="Clat_adaptor_s"/>
    <property type="match status" value="1"/>
</dbReference>
<dbReference type="SUPFAM" id="SSF64356">
    <property type="entry name" value="SNARE-like"/>
    <property type="match status" value="1"/>
</dbReference>
<dbReference type="PROSITE" id="PS00989">
    <property type="entry name" value="CLAT_ADAPTOR_S"/>
    <property type="match status" value="1"/>
</dbReference>
<reference key="1">
    <citation type="submission" date="2004-11" db="EMBL/GenBank/DDBJ databases">
        <authorList>
            <consortium name="The German cDNA consortium"/>
        </authorList>
    </citation>
    <scope>NUCLEOTIDE SEQUENCE [LARGE SCALE MRNA]</scope>
    <source>
        <tissue>Kidney</tissue>
    </source>
</reference>
<comment type="function">
    <text evidence="1">Part of the AP-3 complex, an adaptor-related complex which is not clathrin-associated. The complex is associated with the Golgi region as well as more peripheral structures. It facilitates the budding of vesicles from the Golgi membrane and may be directly involved in trafficking to lysosomes. In concert with the BLOC-1 complex, AP-3 is required to target cargos into vesicles assembled at cell bodies for delivery into neurites and nerve terminals (By similarity).</text>
</comment>
<comment type="subunit">
    <text evidence="1">Adaptor protein complex 3 (AP-3) is a heterotetramer composed of two large adaptins (delta-type subunit AP3D1 and beta-type subunit AP3B1 or AP3B2), a medium adaptin (mu-type subunit AP3M1 or AP3M2) and a small adaptin (sigma-type subunit APS1 or AP3S2). Interacts with AGAP1. AP-3 associates with the BLOC-1 complex (By similarity).</text>
</comment>
<comment type="subcellular location">
    <subcellularLocation>
        <location>Golgi apparatus</location>
    </subcellularLocation>
    <subcellularLocation>
        <location evidence="1">Cytoplasmic vesicle membrane</location>
        <topology evidence="1">Peripheral membrane protein</topology>
        <orientation evidence="1">Cytoplasmic side</orientation>
    </subcellularLocation>
    <text evidence="1">Component of the coat surrounding the cytoplasmic face of coated vesicles located at the Golgi complex.</text>
</comment>
<comment type="similarity">
    <text evidence="2">Belongs to the adaptor complexes small subunit family.</text>
</comment>
<name>AP3S2_PONAB</name>
<keyword id="KW-0968">Cytoplasmic vesicle</keyword>
<keyword id="KW-0333">Golgi apparatus</keyword>
<keyword id="KW-0472">Membrane</keyword>
<keyword id="KW-0653">Protein transport</keyword>
<keyword id="KW-1185">Reference proteome</keyword>
<keyword id="KW-0813">Transport</keyword>
<sequence length="193" mass="22017">MIQAILVFNNHGKPRLVRFYQRFPEEIQQQIVRETFHLVLKRDDNICNFLEGGSLIGGSDYKLIYRHYATLYFVFCVDSSESELGILDLIQVFVETLDKCFENVCELDLIFHMDKVHYILQEVVMGGMVLETNMNEIVAQIEAQNRLEKSEGGLSAAPARAVSAVKNINLPEIPRNINIGDLNIKVPNLSQFV</sequence>
<feature type="chain" id="PRO_0000193819" description="AP-3 complex subunit sigma-2">
    <location>
        <begin position="1"/>
        <end position="193"/>
    </location>
</feature>
<evidence type="ECO:0000250" key="1"/>
<evidence type="ECO:0000305" key="2"/>
<protein>
    <recommendedName>
        <fullName>AP-3 complex subunit sigma-2</fullName>
    </recommendedName>
    <alternativeName>
        <fullName>AP-3 complex subunit sigma-3B</fullName>
    </alternativeName>
    <alternativeName>
        <fullName>Adaptor-related protein complex 3 subunit sigma-2</fullName>
    </alternativeName>
    <alternativeName>
        <fullName>Sigma-3B-adaptin</fullName>
        <shortName>Sigma3B-adaptin</shortName>
    </alternativeName>
    <alternativeName>
        <fullName>Sigma-adaptin 3b</fullName>
    </alternativeName>
</protein>
<organism>
    <name type="scientific">Pongo abelii</name>
    <name type="common">Sumatran orangutan</name>
    <name type="synonym">Pongo pygmaeus abelii</name>
    <dbReference type="NCBI Taxonomy" id="9601"/>
    <lineage>
        <taxon>Eukaryota</taxon>
        <taxon>Metazoa</taxon>
        <taxon>Chordata</taxon>
        <taxon>Craniata</taxon>
        <taxon>Vertebrata</taxon>
        <taxon>Euteleostomi</taxon>
        <taxon>Mammalia</taxon>
        <taxon>Eutheria</taxon>
        <taxon>Euarchontoglires</taxon>
        <taxon>Primates</taxon>
        <taxon>Haplorrhini</taxon>
        <taxon>Catarrhini</taxon>
        <taxon>Hominidae</taxon>
        <taxon>Pongo</taxon>
    </lineage>
</organism>
<gene>
    <name type="primary">AP3S2</name>
</gene>